<comment type="function">
    <text evidence="4 5 6">Splits internally a 1,3-beta-glucan molecule and transfers the newly generated reducing end (the donor) to the non-reducing end of another 1,3-beta-glucan molecule (the acceptor) forming a 1,3-beta linkage, resulting in the elongation of 1,3-beta-glucan chains in the cell wall. Involved in cell wall morphogenesis.</text>
</comment>
<comment type="biophysicochemical properties">
    <phDependence>
        <text evidence="6">Optimum pH is 5. Active from pH 2.5 to 6.0.</text>
    </phDependence>
</comment>
<comment type="subcellular location">
    <subcellularLocation>
        <location>Cell membrane</location>
        <topology>Lipid-anchor</topology>
        <topology>GPI-anchor</topology>
    </subcellularLocation>
</comment>
<comment type="PTM">
    <text>The GPI-like anchor contains a phosphoceramide lipid group. The anchor position has not been determined.</text>
</comment>
<comment type="similarity">
    <text evidence="7">Belongs to the glycosyl hydrolase 72 family.</text>
</comment>
<organism>
    <name type="scientific">Aspergillus fumigatus (strain CBS 144.89 / FGSC A1163 / CEA10)</name>
    <name type="common">Neosartorya fumigata</name>
    <dbReference type="NCBI Taxonomy" id="451804"/>
    <lineage>
        <taxon>Eukaryota</taxon>
        <taxon>Fungi</taxon>
        <taxon>Dikarya</taxon>
        <taxon>Ascomycota</taxon>
        <taxon>Pezizomycotina</taxon>
        <taxon>Eurotiomycetes</taxon>
        <taxon>Eurotiomycetidae</taxon>
        <taxon>Eurotiales</taxon>
        <taxon>Aspergillaceae</taxon>
        <taxon>Aspergillus</taxon>
        <taxon>Aspergillus subgen. Fumigati</taxon>
    </lineage>
</organism>
<keyword id="KW-1003">Cell membrane</keyword>
<keyword id="KW-0903">Direct protein sequencing</keyword>
<keyword id="KW-1015">Disulfide bond</keyword>
<keyword id="KW-0325">Glycoprotein</keyword>
<keyword id="KW-0336">GPI-anchor</keyword>
<keyword id="KW-0449">Lipoprotein</keyword>
<keyword id="KW-0472">Membrane</keyword>
<keyword id="KW-0732">Signal</keyword>
<keyword id="KW-0808">Transferase</keyword>
<protein>
    <recommendedName>
        <fullName>1,3-beta-glucanosyltransferase gel1</fullName>
        <ecNumber>2.4.1.-</ecNumber>
    </recommendedName>
    <alternativeName>
        <fullName>Glucan elongating glucanosyltransferase 1</fullName>
    </alternativeName>
</protein>
<evidence type="ECO:0000250" key="1">
    <source>
        <dbReference type="UniProtKB" id="Q06135"/>
    </source>
</evidence>
<evidence type="ECO:0000255" key="2"/>
<evidence type="ECO:0000256" key="3">
    <source>
        <dbReference type="SAM" id="MobiDB-lite"/>
    </source>
</evidence>
<evidence type="ECO:0000269" key="4">
    <source>
    </source>
</evidence>
<evidence type="ECO:0000269" key="5">
    <source>
    </source>
</evidence>
<evidence type="ECO:0000269" key="6">
    <source>
    </source>
</evidence>
<evidence type="ECO:0000305" key="7"/>
<reference key="1">
    <citation type="journal article" date="2000" name="J. Biol. Chem.">
        <title>Glycosylphosphatidylinositol-anchored glucanosyltransferases play an active role in the biosynthesis of the fungal cell wall.</title>
        <authorList>
            <person name="Mouyna I."/>
            <person name="Fontaine T."/>
            <person name="Vai M."/>
            <person name="Monod M."/>
            <person name="Fonzi W.A."/>
            <person name="Diaquin M."/>
            <person name="Popolo L."/>
            <person name="Hartland R.P."/>
            <person name="Latge J.-P."/>
        </authorList>
    </citation>
    <scope>NUCLEOTIDE SEQUENCE [GENOMIC DNA]</scope>
    <scope>PROTEIN SEQUENCE OF 20-22; 29-47 AND 349-363</scope>
    <scope>FUNCTION</scope>
</reference>
<reference key="2">
    <citation type="journal article" date="2008" name="PLoS Genet.">
        <title>Genomic islands in the pathogenic filamentous fungus Aspergillus fumigatus.</title>
        <authorList>
            <person name="Fedorova N.D."/>
            <person name="Khaldi N."/>
            <person name="Joardar V.S."/>
            <person name="Maiti R."/>
            <person name="Amedeo P."/>
            <person name="Anderson M.J."/>
            <person name="Crabtree J."/>
            <person name="Silva J.C."/>
            <person name="Badger J.H."/>
            <person name="Albarraq A."/>
            <person name="Angiuoli S."/>
            <person name="Bussey H."/>
            <person name="Bowyer P."/>
            <person name="Cotty P.J."/>
            <person name="Dyer P.S."/>
            <person name="Egan A."/>
            <person name="Galens K."/>
            <person name="Fraser-Liggett C.M."/>
            <person name="Haas B.J."/>
            <person name="Inman J.M."/>
            <person name="Kent R."/>
            <person name="Lemieux S."/>
            <person name="Malavazi I."/>
            <person name="Orvis J."/>
            <person name="Roemer T."/>
            <person name="Ronning C.M."/>
            <person name="Sundaram J.P."/>
            <person name="Sutton G."/>
            <person name="Turner G."/>
            <person name="Venter J.C."/>
            <person name="White O.R."/>
            <person name="Whitty B.R."/>
            <person name="Youngman P."/>
            <person name="Wolfe K.H."/>
            <person name="Goldman G.H."/>
            <person name="Wortman J.R."/>
            <person name="Jiang B."/>
            <person name="Denning D.W."/>
            <person name="Nierman W.C."/>
        </authorList>
    </citation>
    <scope>NUCLEOTIDE SEQUENCE [LARGE SCALE GENOMIC DNA]</scope>
    <source>
        <strain>CBS 144.89 / FGSC A1163 / CEA10</strain>
    </source>
</reference>
<reference key="3">
    <citation type="journal article" date="2001" name="Electrophoresis">
        <title>Proteome analysis of Aspergillus fumigatus identifies glycosylphosphatidylinositol-anchored proteins associated to the cell wall biosynthesis.</title>
        <authorList>
            <person name="Bruneau J.-M."/>
            <person name="Magnin T."/>
            <person name="Tagat E."/>
            <person name="Legrand R."/>
            <person name="Bernard M."/>
            <person name="Diaquin M."/>
            <person name="Fudali C."/>
            <person name="Latge J.-P."/>
        </authorList>
    </citation>
    <scope>PROTEIN SEQUENCE OF 36-38; 78-82; 240-242; 313-316 AND 378-389</scope>
    <scope>GPI-ANCHOR</scope>
</reference>
<reference key="4">
    <citation type="journal article" date="1996" name="J. Biol. Chem.">
        <title>A novel beta-(1-3)-glucanosyltransferase from the cell wall of Aspergillus fumigatus.</title>
        <authorList>
            <person name="Hartland R.P."/>
            <person name="Fontaine T."/>
            <person name="Debeaupuis J.-P."/>
            <person name="Simenel C."/>
            <person name="Delepierre M."/>
            <person name="Latge J.-P."/>
        </authorList>
    </citation>
    <scope>FUNCTION</scope>
    <scope>BIOPHYSICOCHEMICAL PROPERTIES</scope>
</reference>
<reference key="5">
    <citation type="journal article" date="2000" name="Biochem. J.">
        <title>Identification of the catalytic residues of the first family of beta(1-3)glucanosyltransferases identified in fungi.</title>
        <authorList>
            <person name="Mouyna I."/>
            <person name="Monod M."/>
            <person name="Fontaine T."/>
            <person name="Henrissat B."/>
            <person name="Lechenne B."/>
            <person name="Latge J.-P."/>
        </authorList>
    </citation>
    <scope>FUNCTION</scope>
    <scope>MUTAGENESIS OF GLU-160 AND GLU-261</scope>
</reference>
<reference key="6">
    <citation type="journal article" date="2003" name="Glycobiology">
        <title>Structures of the glycosylphosphatidylinositol membrane anchors from Aspergillus fumigatus membrane proteins.</title>
        <authorList>
            <person name="Fontaine T."/>
            <person name="Magnin T."/>
            <person name="Melhert A."/>
            <person name="Lamont D."/>
            <person name="Latge J.-P."/>
            <person name="Ferguson M.A.J."/>
        </authorList>
    </citation>
    <scope>IDENTIFICATION BY MASS SPECTROMETRY</scope>
    <scope>STRUCTURE OF GPI-ANCHOR</scope>
</reference>
<accession>B0XT72</accession>
<accession>O74687</accession>
<accession>Q4WIP0</accession>
<feature type="signal peptide" evidence="5">
    <location>
        <begin position="1"/>
        <end position="19"/>
    </location>
</feature>
<feature type="chain" id="PRO_0000343198" description="1,3-beta-glucanosyltransferase gel1">
    <location>
        <begin position="20"/>
        <end position="419"/>
    </location>
</feature>
<feature type="propeptide" id="PRO_0000343199" description="Removed in mature form" evidence="2">
    <location>
        <begin position="420"/>
        <end position="452"/>
    </location>
</feature>
<feature type="region of interest" description="Disordered" evidence="3">
    <location>
        <begin position="325"/>
        <end position="419"/>
    </location>
</feature>
<feature type="compositionally biased region" description="Polar residues" evidence="3">
    <location>
        <begin position="325"/>
        <end position="340"/>
    </location>
</feature>
<feature type="compositionally biased region" description="Low complexity" evidence="3">
    <location>
        <begin position="393"/>
        <end position="419"/>
    </location>
</feature>
<feature type="active site" description="Proton donor" evidence="7">
    <location>
        <position position="160"/>
    </location>
</feature>
<feature type="active site" description="Nucleophile" evidence="7">
    <location>
        <position position="261"/>
    </location>
</feature>
<feature type="binding site" evidence="1">
    <location>
        <position position="89"/>
    </location>
    <ligand>
        <name>(1,3-beta-D-glucosyl)n</name>
        <dbReference type="ChEBI" id="CHEBI:37671"/>
        <label>1</label>
        <note>donor substrate</note>
    </ligand>
</feature>
<feature type="binding site" evidence="1">
    <location>
        <position position="159"/>
    </location>
    <ligand>
        <name>(1,3-beta-D-glucosyl)n</name>
        <dbReference type="ChEBI" id="CHEBI:37671"/>
        <label>1</label>
        <note>donor substrate</note>
    </ligand>
</feature>
<feature type="binding site" evidence="1">
    <location>
        <position position="160"/>
    </location>
    <ligand>
        <name>(1,3-beta-D-glucosyl)n</name>
        <dbReference type="ChEBI" id="CHEBI:37671"/>
        <label>2</label>
        <note>acceptor substrate</note>
    </ligand>
</feature>
<feature type="binding site" evidence="1">
    <location>
        <position position="201"/>
    </location>
    <ligand>
        <name>(1,3-beta-D-glucosyl)n</name>
        <dbReference type="ChEBI" id="CHEBI:37671"/>
        <label>2</label>
        <note>acceptor substrate</note>
    </ligand>
</feature>
<feature type="binding site" evidence="1">
    <location>
        <position position="206"/>
    </location>
    <ligand>
        <name>(1,3-beta-D-glucosyl)n</name>
        <dbReference type="ChEBI" id="CHEBI:37671"/>
        <label>2</label>
        <note>acceptor substrate</note>
    </ligand>
</feature>
<feature type="binding site" evidence="1">
    <location>
        <position position="292"/>
    </location>
    <ligand>
        <name>(1,3-beta-D-glucosyl)n</name>
        <dbReference type="ChEBI" id="CHEBI:37671"/>
        <label>1</label>
        <note>donor substrate</note>
    </ligand>
</feature>
<feature type="lipid moiety-binding region" description="GPI-like-anchor amidated alanine" evidence="2">
    <location>
        <position position="419"/>
    </location>
</feature>
<feature type="glycosylation site" description="N-linked (GlcNAc...) asparagine" evidence="2">
    <location>
        <position position="249"/>
    </location>
</feature>
<feature type="glycosylation site" description="N-linked (GlcNAc...) asparagine" evidence="2">
    <location>
        <position position="337"/>
    </location>
</feature>
<feature type="disulfide bond" evidence="1">
    <location>
        <begin position="71"/>
        <end position="100"/>
    </location>
</feature>
<feature type="disulfide bond" evidence="1">
    <location>
        <begin position="215"/>
        <end position="345"/>
    </location>
</feature>
<feature type="disulfide bond" evidence="1">
    <location>
        <begin position="233"/>
        <end position="264"/>
    </location>
</feature>
<feature type="mutagenesis site" description="Loss of function." evidence="4">
    <original>E</original>
    <variation>L</variation>
    <location>
        <position position="160"/>
    </location>
</feature>
<feature type="mutagenesis site" description="Loss of function." evidence="4">
    <original>E</original>
    <variation>F</variation>
    <location>
        <position position="261"/>
    </location>
</feature>
<feature type="sequence conflict" description="In Ref. 1; AAC35942." evidence="7" ref="1">
    <original>A</original>
    <variation>T</variation>
    <location>
        <position position="103"/>
    </location>
</feature>
<proteinExistence type="evidence at protein level"/>
<sequence length="452" mass="48121">MKASAVTAALAVGASTVLAAPSIKARDDVTPITVKGNAFFKGDERFYIRGVDYQPGGSSDLADPIADADGCKRDIAKFKELGLNTIRVYSVDNSKNHDECMNALADAGIYLVLDVNTPKYSINRAKPKESYNDVYLQYIFATVDAFAGYKNTLAFFSGNEVINDGPSSSAAPYVKAVTRDLRQYIRSRKYREIPVGYSAADIDTNRLQMAQYMNCGSDDERSDFFAFNDYSWCDPSSFKTSGWDQKVKNFTGYGLPLFLSEYGCNTNKRQFQEVSSLYSTDMTGVYSGGLVYEYSQEASNYGLVEISGNNVKELPDFDALKTAFEKTSNPSGDGNYNKTGGANPCPAKDAPNWDVDNDALPAIPEPAKKYMTEGAGKGPGFAGPGSQDRGTQSTATAEPGSGSATGSSSSGTSTSSKGAAAGLTVPSLTMAPVVVGAVTLLSTVFGAGLVLL</sequence>
<name>GEL1_ASPFC</name>
<gene>
    <name type="primary">gel1</name>
    <name type="synonym">bgt2</name>
    <name type="ORF">AFUB_018250</name>
</gene>
<dbReference type="EC" id="2.4.1.-"/>
<dbReference type="EMBL" id="AF072700">
    <property type="protein sequence ID" value="AAC35942.1"/>
    <property type="molecule type" value="Genomic_DNA"/>
</dbReference>
<dbReference type="EMBL" id="DS499595">
    <property type="protein sequence ID" value="EDP53781.1"/>
    <property type="molecule type" value="Genomic_DNA"/>
</dbReference>
<dbReference type="SMR" id="B0XT72"/>
<dbReference type="GlyCosmos" id="B0XT72">
    <property type="glycosylation" value="2 sites, No reported glycans"/>
</dbReference>
<dbReference type="EnsemblFungi" id="EDP53781">
    <property type="protein sequence ID" value="EDP53781"/>
    <property type="gene ID" value="AFUB_018250"/>
</dbReference>
<dbReference type="VEuPathDB" id="FungiDB:AFUB_018250"/>
<dbReference type="HOGENOM" id="CLU_021855_1_0_1"/>
<dbReference type="OrthoDB" id="99032at5052"/>
<dbReference type="PhylomeDB" id="B0XT72"/>
<dbReference type="Proteomes" id="UP000001699">
    <property type="component" value="Unassembled WGS sequence"/>
</dbReference>
<dbReference type="GO" id="GO:0005886">
    <property type="term" value="C:plasma membrane"/>
    <property type="evidence" value="ECO:0007669"/>
    <property type="project" value="UniProtKB-SubCell"/>
</dbReference>
<dbReference type="GO" id="GO:0098552">
    <property type="term" value="C:side of membrane"/>
    <property type="evidence" value="ECO:0007669"/>
    <property type="project" value="UniProtKB-KW"/>
</dbReference>
<dbReference type="GO" id="GO:0042124">
    <property type="term" value="F:1,3-beta-glucanosyltransferase activity"/>
    <property type="evidence" value="ECO:0007669"/>
    <property type="project" value="TreeGrafter"/>
</dbReference>
<dbReference type="GO" id="GO:0071970">
    <property type="term" value="P:fungal-type cell wall (1-&gt;3)-beta-D-glucan biosynthetic process"/>
    <property type="evidence" value="ECO:0007669"/>
    <property type="project" value="TreeGrafter"/>
</dbReference>
<dbReference type="GO" id="GO:0031505">
    <property type="term" value="P:fungal-type cell wall organization"/>
    <property type="evidence" value="ECO:0007669"/>
    <property type="project" value="TreeGrafter"/>
</dbReference>
<dbReference type="FunFam" id="3.20.20.80:FF:000032">
    <property type="entry name" value="1,3-beta-glucanosyltransferase"/>
    <property type="match status" value="1"/>
</dbReference>
<dbReference type="Gene3D" id="3.20.20.80">
    <property type="entry name" value="Glycosidases"/>
    <property type="match status" value="1"/>
</dbReference>
<dbReference type="InterPro" id="IPR004886">
    <property type="entry name" value="Glucanosyltransferase"/>
</dbReference>
<dbReference type="InterPro" id="IPR017853">
    <property type="entry name" value="Glycoside_hydrolase_SF"/>
</dbReference>
<dbReference type="PANTHER" id="PTHR31468">
    <property type="entry name" value="1,3-BETA-GLUCANOSYLTRANSFERASE GAS1"/>
    <property type="match status" value="1"/>
</dbReference>
<dbReference type="PANTHER" id="PTHR31468:SF5">
    <property type="entry name" value="1,3-BETA-GLUCANOSYLTRANSFERASE GAS5"/>
    <property type="match status" value="1"/>
</dbReference>
<dbReference type="Pfam" id="PF03198">
    <property type="entry name" value="Glyco_hydro_72"/>
    <property type="match status" value="1"/>
</dbReference>
<dbReference type="SUPFAM" id="SSF51445">
    <property type="entry name" value="(Trans)glycosidases"/>
    <property type="match status" value="1"/>
</dbReference>